<dbReference type="EC" id="2.3.1.31" evidence="1"/>
<dbReference type="EMBL" id="CP000141">
    <property type="protein sequence ID" value="ABB13941.1"/>
    <property type="molecule type" value="Genomic_DNA"/>
</dbReference>
<dbReference type="RefSeq" id="WP_011344795.1">
    <property type="nucleotide sequence ID" value="NC_007503.1"/>
</dbReference>
<dbReference type="SMR" id="Q3AAW2"/>
<dbReference type="STRING" id="246194.CHY_1903"/>
<dbReference type="ESTHER" id="carhz-metx">
    <property type="family name" value="Homoserine_transacetylase"/>
</dbReference>
<dbReference type="KEGG" id="chy:CHY_1903"/>
<dbReference type="eggNOG" id="COG2021">
    <property type="taxonomic scope" value="Bacteria"/>
</dbReference>
<dbReference type="HOGENOM" id="CLU_028760_1_2_9"/>
<dbReference type="InParanoid" id="Q3AAW2"/>
<dbReference type="OrthoDB" id="9800754at2"/>
<dbReference type="UniPathway" id="UPA00051">
    <property type="reaction ID" value="UER00074"/>
</dbReference>
<dbReference type="Proteomes" id="UP000002706">
    <property type="component" value="Chromosome"/>
</dbReference>
<dbReference type="GO" id="GO:0005737">
    <property type="term" value="C:cytoplasm"/>
    <property type="evidence" value="ECO:0007669"/>
    <property type="project" value="UniProtKB-SubCell"/>
</dbReference>
<dbReference type="GO" id="GO:0004414">
    <property type="term" value="F:homoserine O-acetyltransferase activity"/>
    <property type="evidence" value="ECO:0007669"/>
    <property type="project" value="UniProtKB-UniRule"/>
</dbReference>
<dbReference type="GO" id="GO:0009092">
    <property type="term" value="P:homoserine metabolic process"/>
    <property type="evidence" value="ECO:0007669"/>
    <property type="project" value="TreeGrafter"/>
</dbReference>
<dbReference type="GO" id="GO:0009086">
    <property type="term" value="P:methionine biosynthetic process"/>
    <property type="evidence" value="ECO:0007669"/>
    <property type="project" value="UniProtKB-UniRule"/>
</dbReference>
<dbReference type="FunFam" id="1.10.1740.110:FF:000001">
    <property type="entry name" value="Homoserine O-acetyltransferase"/>
    <property type="match status" value="1"/>
</dbReference>
<dbReference type="Gene3D" id="1.10.1740.110">
    <property type="match status" value="1"/>
</dbReference>
<dbReference type="Gene3D" id="3.40.50.1820">
    <property type="entry name" value="alpha/beta hydrolase"/>
    <property type="match status" value="1"/>
</dbReference>
<dbReference type="HAMAP" id="MF_00296">
    <property type="entry name" value="MetX_acyltransf"/>
    <property type="match status" value="1"/>
</dbReference>
<dbReference type="InterPro" id="IPR000073">
    <property type="entry name" value="AB_hydrolase_1"/>
</dbReference>
<dbReference type="InterPro" id="IPR029058">
    <property type="entry name" value="AB_hydrolase_fold"/>
</dbReference>
<dbReference type="InterPro" id="IPR008220">
    <property type="entry name" value="HAT_MetX-like"/>
</dbReference>
<dbReference type="NCBIfam" id="TIGR01392">
    <property type="entry name" value="homoserO_Ac_trn"/>
    <property type="match status" value="1"/>
</dbReference>
<dbReference type="NCBIfam" id="NF001209">
    <property type="entry name" value="PRK00175.1"/>
    <property type="match status" value="1"/>
</dbReference>
<dbReference type="PANTHER" id="PTHR32268">
    <property type="entry name" value="HOMOSERINE O-ACETYLTRANSFERASE"/>
    <property type="match status" value="1"/>
</dbReference>
<dbReference type="PANTHER" id="PTHR32268:SF11">
    <property type="entry name" value="HOMOSERINE O-ACETYLTRANSFERASE"/>
    <property type="match status" value="1"/>
</dbReference>
<dbReference type="Pfam" id="PF00561">
    <property type="entry name" value="Abhydrolase_1"/>
    <property type="match status" value="1"/>
</dbReference>
<dbReference type="PIRSF" id="PIRSF000443">
    <property type="entry name" value="Homoser_Ac_trans"/>
    <property type="match status" value="1"/>
</dbReference>
<dbReference type="SUPFAM" id="SSF53474">
    <property type="entry name" value="alpha/beta-Hydrolases"/>
    <property type="match status" value="1"/>
</dbReference>
<evidence type="ECO:0000255" key="1">
    <source>
        <dbReference type="HAMAP-Rule" id="MF_00296"/>
    </source>
</evidence>
<accession>Q3AAW2</accession>
<feature type="chain" id="PRO_0000231866" description="Homoserine O-acetyltransferase">
    <location>
        <begin position="1"/>
        <end position="379"/>
    </location>
</feature>
<feature type="domain" description="AB hydrolase-1" evidence="1">
    <location>
        <begin position="45"/>
        <end position="355"/>
    </location>
</feature>
<feature type="active site" description="Nucleophile" evidence="1">
    <location>
        <position position="151"/>
    </location>
</feature>
<feature type="active site" evidence="1">
    <location>
        <position position="316"/>
    </location>
</feature>
<feature type="active site" evidence="1">
    <location>
        <position position="349"/>
    </location>
</feature>
<feature type="binding site" evidence="1">
    <location>
        <position position="220"/>
    </location>
    <ligand>
        <name>substrate</name>
    </ligand>
</feature>
<feature type="binding site" evidence="1">
    <location>
        <position position="350"/>
    </location>
    <ligand>
        <name>substrate</name>
    </ligand>
</feature>
<name>METXA_CARHZ</name>
<gene>
    <name evidence="1" type="primary">metXA</name>
    <name type="ordered locus">CHY_1903</name>
</gene>
<keyword id="KW-0012">Acyltransferase</keyword>
<keyword id="KW-0028">Amino-acid biosynthesis</keyword>
<keyword id="KW-0963">Cytoplasm</keyword>
<keyword id="KW-0486">Methionine biosynthesis</keyword>
<keyword id="KW-1185">Reference proteome</keyword>
<keyword id="KW-0808">Transferase</keyword>
<comment type="function">
    <text evidence="1">Transfers an acetyl group from acetyl-CoA to L-homoserine, forming acetyl-L-homoserine.</text>
</comment>
<comment type="catalytic activity">
    <reaction evidence="1">
        <text>L-homoserine + acetyl-CoA = O-acetyl-L-homoserine + CoA</text>
        <dbReference type="Rhea" id="RHEA:13701"/>
        <dbReference type="ChEBI" id="CHEBI:57287"/>
        <dbReference type="ChEBI" id="CHEBI:57288"/>
        <dbReference type="ChEBI" id="CHEBI:57476"/>
        <dbReference type="ChEBI" id="CHEBI:57716"/>
        <dbReference type="EC" id="2.3.1.31"/>
    </reaction>
</comment>
<comment type="pathway">
    <text evidence="1">Amino-acid biosynthesis; L-methionine biosynthesis via de novo pathway; O-acetyl-L-homoserine from L-homoserine: step 1/1.</text>
</comment>
<comment type="subunit">
    <text evidence="1">Homodimer.</text>
</comment>
<comment type="subcellular location">
    <subcellularLocation>
        <location evidence="1">Cytoplasm</location>
    </subcellularLocation>
</comment>
<comment type="similarity">
    <text evidence="1">Belongs to the AB hydrolase superfamily. MetX family.</text>
</comment>
<reference key="1">
    <citation type="journal article" date="2005" name="PLoS Genet.">
        <title>Life in hot carbon monoxide: the complete genome sequence of Carboxydothermus hydrogenoformans Z-2901.</title>
        <authorList>
            <person name="Wu M."/>
            <person name="Ren Q."/>
            <person name="Durkin A.S."/>
            <person name="Daugherty S.C."/>
            <person name="Brinkac L.M."/>
            <person name="Dodson R.J."/>
            <person name="Madupu R."/>
            <person name="Sullivan S.A."/>
            <person name="Kolonay J.F."/>
            <person name="Nelson W.C."/>
            <person name="Tallon L.J."/>
            <person name="Jones K.M."/>
            <person name="Ulrich L.E."/>
            <person name="Gonzalez J.M."/>
            <person name="Zhulin I.B."/>
            <person name="Robb F.T."/>
            <person name="Eisen J.A."/>
        </authorList>
    </citation>
    <scope>NUCLEOTIDE SEQUENCE [LARGE SCALE GENOMIC DNA]</scope>
    <source>
        <strain>ATCC BAA-161 / DSM 6008 / Z-2901</strain>
    </source>
</reference>
<proteinExistence type="inferred from homology"/>
<organism>
    <name type="scientific">Carboxydothermus hydrogenoformans (strain ATCC BAA-161 / DSM 6008 / Z-2901)</name>
    <dbReference type="NCBI Taxonomy" id="246194"/>
    <lineage>
        <taxon>Bacteria</taxon>
        <taxon>Bacillati</taxon>
        <taxon>Bacillota</taxon>
        <taxon>Clostridia</taxon>
        <taxon>Thermoanaerobacterales</taxon>
        <taxon>Thermoanaerobacteraceae</taxon>
        <taxon>Carboxydothermus</taxon>
    </lineage>
</organism>
<sequence>MNGSVGIVETKKVTFPEITLECGEKIAPVTVAYETYGELNERGDNAILILHALTGDAHVAGKHRPEDKVAGWWDPMVGPGRPFDTNKYFIVCSNVLGGCYGTTGPSSINPATGRPWGMSFPIITIRDMVNLQYKLVRHLGITKILAAVGGSMGGMQALEWAYMYPEMLKSVVAIATSARLSPFGIAFNAVGREAIMTDPEWRGGNYYGFEGPKRGLALARMIGIITYKSDISWQYRFGRTHTYETDQELFSHTSRFEIENYLYYQGDKLVKRFDANTYLYLLKAMDLHDISRGRGRYREILKELKTPLLAIGIDTDFLYPTYQQKEIVEALKEAKKEAYYWELSSPHGHDAFLIEFSKMAPILSNFLEYVAGRRATINF</sequence>
<protein>
    <recommendedName>
        <fullName evidence="1">Homoserine O-acetyltransferase</fullName>
        <shortName evidence="1">HAT</shortName>
        <ecNumber evidence="1">2.3.1.31</ecNumber>
    </recommendedName>
    <alternativeName>
        <fullName evidence="1">Homoserine transacetylase</fullName>
        <shortName evidence="1">HTA</shortName>
    </alternativeName>
</protein>